<organism>
    <name type="scientific">Fowlpox virus (strain NVSL)</name>
    <name type="common">FPV</name>
    <dbReference type="NCBI Taxonomy" id="928301"/>
    <lineage>
        <taxon>Viruses</taxon>
        <taxon>Varidnaviria</taxon>
        <taxon>Bamfordvirae</taxon>
        <taxon>Nucleocytoviricota</taxon>
        <taxon>Pokkesviricetes</taxon>
        <taxon>Chitovirales</taxon>
        <taxon>Poxviridae</taxon>
        <taxon>Chordopoxvirinae</taxon>
        <taxon>Avipoxvirus</taxon>
        <taxon>Fowlpox virus</taxon>
    </lineage>
</organism>
<evidence type="ECO:0000255" key="1">
    <source>
        <dbReference type="PROSITE-ProRule" id="PRU00040"/>
    </source>
</evidence>
<sequence>MEEGKPRRSSAVLWMLIPCGSIIIVLSVFVIILSTRPPVPPDIKILYCKEGWVGYNKNCYFFSEEKNNKSLAVERCKDMDGHLTSISSKEEFKFILRYKGPGNHWIGIEKVDFNGTWKLEDGSSYDNIVPIKGIGDCAYLSDRSIMSSFCFLPKKWICRIILL</sequence>
<feature type="chain" id="PRO_0000046729" description="Putative C-type lectin protein FPV239">
    <location>
        <begin position="1"/>
        <end position="163"/>
    </location>
</feature>
<feature type="domain" description="C-type lectin" evidence="1">
    <location>
        <begin position="48"/>
        <end position="159"/>
    </location>
</feature>
<feature type="disulfide bond" evidence="1">
    <location>
        <begin position="76"/>
        <end position="158"/>
    </location>
</feature>
<feature type="disulfide bond" evidence="1">
    <location>
        <begin position="137"/>
        <end position="150"/>
    </location>
</feature>
<name>V239_FOWPN</name>
<dbReference type="EMBL" id="AF198100">
    <property type="protein sequence ID" value="AAF44583.1"/>
    <property type="molecule type" value="Genomic_DNA"/>
</dbReference>
<dbReference type="EMBL" id="D00295">
    <property type="protein sequence ID" value="BAA00203.1"/>
    <property type="molecule type" value="Genomic_DNA"/>
</dbReference>
<dbReference type="PIR" id="H29963">
    <property type="entry name" value="WMVZF8"/>
</dbReference>
<dbReference type="RefSeq" id="NP_039201.1">
    <property type="nucleotide sequence ID" value="NC_002188.1"/>
</dbReference>
<dbReference type="SMR" id="P14371"/>
<dbReference type="GeneID" id="1486811"/>
<dbReference type="KEGG" id="vg:1486811"/>
<dbReference type="Proteomes" id="UP000008597">
    <property type="component" value="Segment"/>
</dbReference>
<dbReference type="GO" id="GO:0030246">
    <property type="term" value="F:carbohydrate binding"/>
    <property type="evidence" value="ECO:0007669"/>
    <property type="project" value="UniProtKB-KW"/>
</dbReference>
<dbReference type="CDD" id="cd03593">
    <property type="entry name" value="CLECT_NK_receptors_like"/>
    <property type="match status" value="1"/>
</dbReference>
<dbReference type="Gene3D" id="3.10.100.10">
    <property type="entry name" value="Mannose-Binding Protein A, subunit A"/>
    <property type="match status" value="1"/>
</dbReference>
<dbReference type="InterPro" id="IPR001304">
    <property type="entry name" value="C-type_lectin-like"/>
</dbReference>
<dbReference type="InterPro" id="IPR016186">
    <property type="entry name" value="C-type_lectin-like/link_sf"/>
</dbReference>
<dbReference type="InterPro" id="IPR050828">
    <property type="entry name" value="C-type_lectin/matrix_domain"/>
</dbReference>
<dbReference type="InterPro" id="IPR016187">
    <property type="entry name" value="CTDL_fold"/>
</dbReference>
<dbReference type="InterPro" id="IPR033992">
    <property type="entry name" value="NKR-like_CTLD"/>
</dbReference>
<dbReference type="PANTHER" id="PTHR45710:SF15">
    <property type="entry name" value="C-TYPE LECTIN DOMAIN FAMILY 2 MEMBER B"/>
    <property type="match status" value="1"/>
</dbReference>
<dbReference type="PANTHER" id="PTHR45710">
    <property type="entry name" value="C-TYPE LECTIN DOMAIN-CONTAINING PROTEIN 180"/>
    <property type="match status" value="1"/>
</dbReference>
<dbReference type="Pfam" id="PF00059">
    <property type="entry name" value="Lectin_C"/>
    <property type="match status" value="1"/>
</dbReference>
<dbReference type="SMART" id="SM00034">
    <property type="entry name" value="CLECT"/>
    <property type="match status" value="1"/>
</dbReference>
<dbReference type="SUPFAM" id="SSF56436">
    <property type="entry name" value="C-type lectin-like"/>
    <property type="match status" value="1"/>
</dbReference>
<dbReference type="PROSITE" id="PS50041">
    <property type="entry name" value="C_TYPE_LECTIN_2"/>
    <property type="match status" value="1"/>
</dbReference>
<reference key="1">
    <citation type="journal article" date="2000" name="J. Virol.">
        <title>The genome of fowlpox virus.</title>
        <authorList>
            <person name="Afonso C.L."/>
            <person name="Tulman E.R."/>
            <person name="Lu Z."/>
            <person name="Zsak L."/>
            <person name="Kutish G.F."/>
            <person name="Rock D.L."/>
        </authorList>
    </citation>
    <scope>NUCLEOTIDE SEQUENCE [LARGE SCALE GENOMIC DNA]</scope>
</reference>
<reference key="2">
    <citation type="journal article" date="1988" name="J. Gen. Virol.">
        <title>Sequence analysis of an 11.2 kilobase, near-terminal, BamHI fragment of fowlpox virus.</title>
        <authorList>
            <person name="Tomley F."/>
            <person name="Binns M."/>
            <person name="Campbell J."/>
            <person name="Boursnell M.E.G."/>
        </authorList>
    </citation>
    <scope>NUCLEOTIDE SEQUENCE [GENOMIC DNA] OF 1-116</scope>
    <source>
        <strain>FP-9 / Isolate HP-438</strain>
    </source>
</reference>
<proteinExistence type="predicted"/>
<keyword id="KW-1015">Disulfide bond</keyword>
<keyword id="KW-0430">Lectin</keyword>
<keyword id="KW-1185">Reference proteome</keyword>
<protein>
    <recommendedName>
        <fullName>Putative C-type lectin protein FPV239</fullName>
    </recommendedName>
    <alternativeName>
        <fullName>BamHI-ORF8</fullName>
    </alternativeName>
</protein>
<gene>
    <name type="ordered locus">FPV239</name>
</gene>
<organismHost>
    <name type="scientific">Vertebrata</name>
    <dbReference type="NCBI Taxonomy" id="7742"/>
</organismHost>
<accession>P14371</accession>
<accession>Q9J500</accession>